<protein>
    <recommendedName>
        <fullName evidence="6">Single-stranded DNA-binding protein</fullName>
        <shortName evidence="5">SSB</shortName>
    </recommendedName>
    <alternativeName>
        <fullName evidence="7">Gene product 5</fullName>
        <shortName evidence="7">gp5</shortName>
    </alternativeName>
    <alternativeName>
        <fullName evidence="7">Protein p5</fullName>
    </alternativeName>
</protein>
<organismHost>
    <name type="scientific">Bacillus subtilis</name>
    <dbReference type="NCBI Taxonomy" id="1423"/>
</organismHost>
<reference key="1">
    <citation type="journal article" date="1982" name="Gene">
        <title>Nucleotide sequence of the major early region of bacteriophage phi 29.</title>
        <authorList>
            <person name="Yoshikawa H."/>
            <person name="Ito J."/>
        </authorList>
    </citation>
    <scope>NUCLEOTIDE SEQUENCE [GENOMIC DNA]</scope>
</reference>
<reference key="2">
    <citation type="submission" date="2008-05" db="EMBL/GenBank/DDBJ databases">
        <authorList>
            <person name="Villegas A.P."/>
            <person name="Lingohr E.J."/>
            <person name="Ceyssens P.-J."/>
            <person name="Kropinski A.M."/>
        </authorList>
    </citation>
    <scope>NUCLEOTIDE SEQUENCE [GENOMIC DNA]</scope>
</reference>
<reference key="3">
    <citation type="journal article" date="1989" name="Nucleic Acids Res.">
        <title>Characterization of the phage phi 29 protein p5 as a single-stranded DNA binding protein. Function in phi 29 DNA-protein p3 replication.</title>
        <authorList>
            <person name="Martin G."/>
            <person name="Lazaro J.M."/>
            <person name="Mendez E."/>
            <person name="Salas M."/>
        </authorList>
    </citation>
    <scope>PROTEIN SEQUENCE OF 1-7</scope>
    <scope>FUNCTION</scope>
    <scope>DNA-BINDING</scope>
</reference>
<reference key="4">
    <citation type="journal article" date="1991" name="J. Biol. Chem.">
        <title>Mechanism of stimulation of DNA replication by bacteriophage phi 29 single-stranded DNA-binding protein p5.</title>
        <authorList>
            <person name="Gutierrez C."/>
            <person name="Martin G."/>
            <person name="Sogo J.M."/>
            <person name="Salas M."/>
        </authorList>
    </citation>
    <scope>CHARACTERIZATION</scope>
    <scope>FUNCTION</scope>
</reference>
<reference key="5">
    <citation type="journal article" date="1994" name="J. Mol. Biol.">
        <title>Complex formation between phage phi 29 single-stranded DNA binding protein and DNA.</title>
        <authorList>
            <person name="Soengas M.S."/>
            <person name="Esteban J.A."/>
            <person name="Salas M."/>
            <person name="Gutierrez C."/>
        </authorList>
    </citation>
    <scope>DNA-BINDING</scope>
</reference>
<reference key="6">
    <citation type="journal article" date="1995" name="J. Mol. Biol.">
        <title>Helix-destabilizing activity of phi 29 single-stranded DNA binding protein: effect on the elongation rate during strand displacement DNA replication.</title>
        <authorList>
            <person name="Soengas M.S."/>
            <person name="Gutierrez C."/>
            <person name="Salas M."/>
        </authorList>
    </citation>
    <scope>CHARACTERIZATION</scope>
    <scope>FUNCTION</scope>
</reference>
<reference key="7">
    <citation type="journal article" date="2000" name="J. Mol. Biol.">
        <title>Structural and functional comparative study of the complexes formed by viral phi29, Nf and GA-1 SSB proteins with DNA.</title>
        <authorList>
            <person name="Gascon I."/>
            <person name="Gutierrez C."/>
            <person name="Salas M."/>
        </authorList>
    </citation>
    <scope>SUBUNIT</scope>
</reference>
<keyword id="KW-0903">Direct protein sequencing</keyword>
<keyword id="KW-0235">DNA replication</keyword>
<keyword id="KW-0238">DNA-binding</keyword>
<keyword id="KW-0244">Early protein</keyword>
<keyword id="KW-1185">Reference proteome</keyword>
<keyword id="KW-1194">Viral DNA replication</keyword>
<comment type="function">
    <text evidence="2 3 4 8">Single-stranded DNA binding protein required for the elongation during viral DNA replication by strand displacement (PubMed:1899235, PubMed:2499869, PubMed:7473731, PubMed:8196055). Displaced viral DNA strands are transiently coated with the ssDNA-binding protein and therefore protected against nucleases (PubMed:2499869, PubMed:7473731). The latter is then probably removed by the replisome that performs lagging strand synthesis or during the events that lead up to the recombination process (PubMed:7473731). Stimulates in vitro DNA replication several fold (PubMed:1899235). Has helix-destabilizing activity since it removes secondary structure from the ssDNA in replicative intermediates (PubMed:7473731).</text>
</comment>
<comment type="subunit">
    <text evidence="1">Monomer.</text>
</comment>
<comment type="similarity">
    <text evidence="7">Belongs to the phi29likevirus single-strand-binding protein family.</text>
</comment>
<accession>Q38504</accession>
<accession>B3VMN9</accession>
<sequence>MENTNIVKATFDTETLEGQIKIFNAQTGGGQSFKNLPDGTIIEANAIAQYKQVSDTYGDAKEETVTTIFAADGSLYSAISKTVAEAASDLIDLVTRHKLETFKVKVVQGTSSKGNVFFSLQLSL</sequence>
<name>SSB_BPPH2</name>
<proteinExistence type="evidence at protein level"/>
<dbReference type="EMBL" id="V01155">
    <property type="protein sequence ID" value="CAA24483.1"/>
    <property type="molecule type" value="Genomic_DNA"/>
</dbReference>
<dbReference type="EMBL" id="EU771092">
    <property type="protein sequence ID" value="ACE96026.1"/>
    <property type="molecule type" value="Genomic_DNA"/>
</dbReference>
<dbReference type="RefSeq" id="YP_002004532.1">
    <property type="nucleotide sequence ID" value="NC_011048.1"/>
</dbReference>
<dbReference type="BMRB" id="Q38504"/>
<dbReference type="GeneID" id="6446522"/>
<dbReference type="KEGG" id="vg:6446522"/>
<dbReference type="Proteomes" id="UP000001207">
    <property type="component" value="Genome"/>
</dbReference>
<dbReference type="GO" id="GO:0003677">
    <property type="term" value="F:DNA binding"/>
    <property type="evidence" value="ECO:0000314"/>
    <property type="project" value="UniProtKB"/>
</dbReference>
<dbReference type="GO" id="GO:0006260">
    <property type="term" value="P:DNA replication"/>
    <property type="evidence" value="ECO:0007669"/>
    <property type="project" value="UniProtKB-KW"/>
</dbReference>
<dbReference type="GO" id="GO:0039693">
    <property type="term" value="P:viral DNA genome replication"/>
    <property type="evidence" value="ECO:0000314"/>
    <property type="project" value="UniProtKB"/>
</dbReference>
<dbReference type="InterPro" id="IPR035408">
    <property type="entry name" value="Phi29_Phage_SSB"/>
</dbReference>
<dbReference type="Pfam" id="PF17427">
    <property type="entry name" value="Phi29_Phage_SSB"/>
    <property type="match status" value="1"/>
</dbReference>
<organism>
    <name type="scientific">Bacillus phage phi29</name>
    <name type="common">Bacteriophage phi-29</name>
    <dbReference type="NCBI Taxonomy" id="2884424"/>
    <lineage>
        <taxon>Viruses</taxon>
        <taxon>Duplodnaviria</taxon>
        <taxon>Heunggongvirae</taxon>
        <taxon>Uroviricota</taxon>
        <taxon>Caudoviricetes</taxon>
        <taxon>Salasmaviridae</taxon>
        <taxon>Picovirinae</taxon>
        <taxon>Salasvirus</taxon>
        <taxon>Salasvirus phi29</taxon>
    </lineage>
</organism>
<evidence type="ECO:0000269" key="1">
    <source>
    </source>
</evidence>
<evidence type="ECO:0000269" key="2">
    <source>
    </source>
</evidence>
<evidence type="ECO:0000269" key="3">
    <source>
    </source>
</evidence>
<evidence type="ECO:0000269" key="4">
    <source>
    </source>
</evidence>
<evidence type="ECO:0000303" key="5">
    <source>
    </source>
</evidence>
<evidence type="ECO:0000303" key="6">
    <source>
    </source>
</evidence>
<evidence type="ECO:0000305" key="7"/>
<evidence type="ECO:0000305" key="8">
    <source>
    </source>
</evidence>
<feature type="chain" id="PRO_0000106563" description="Single-stranded DNA-binding protein">
    <location>
        <begin position="1"/>
        <end position="124"/>
    </location>
</feature>
<gene>
    <name type="primary">5</name>
    <name type="synonym">5A</name>
</gene>